<proteinExistence type="inferred from homology"/>
<keyword id="KW-0456">Lyase</keyword>
<sequence>MIVRNVKDVIGTQDEVRTDTWVSRRVLLKKDGMGFSFHETTIFPGGRTHIHYKNHLEAVWCIEGDGSIETIADGKKYELGPGVVYALNEHDEHWLCGGKEPLRVICVFNPPLTGQEVHDADGVYALPAEAQAA</sequence>
<accession>A9IJZ8</accession>
<protein>
    <recommendedName>
        <fullName evidence="1">L-ectoine synthase</fullName>
        <ecNumber evidence="1">4.2.1.108</ecNumber>
    </recommendedName>
    <alternativeName>
        <fullName evidence="1">N-acetyldiaminobutyrate dehydratase</fullName>
    </alternativeName>
</protein>
<organism>
    <name type="scientific">Bordetella petrii (strain ATCC BAA-461 / DSM 12804 / CCUG 43448)</name>
    <dbReference type="NCBI Taxonomy" id="340100"/>
    <lineage>
        <taxon>Bacteria</taxon>
        <taxon>Pseudomonadati</taxon>
        <taxon>Pseudomonadota</taxon>
        <taxon>Betaproteobacteria</taxon>
        <taxon>Burkholderiales</taxon>
        <taxon>Alcaligenaceae</taxon>
        <taxon>Bordetella</taxon>
    </lineage>
</organism>
<evidence type="ECO:0000255" key="1">
    <source>
        <dbReference type="HAMAP-Rule" id="MF_01255"/>
    </source>
</evidence>
<name>ECTC_BORPD</name>
<dbReference type="EC" id="4.2.1.108" evidence="1"/>
<dbReference type="EMBL" id="AM902716">
    <property type="protein sequence ID" value="CAP42323.1"/>
    <property type="molecule type" value="Genomic_DNA"/>
</dbReference>
<dbReference type="SMR" id="A9IJZ8"/>
<dbReference type="STRING" id="94624.Bpet1983"/>
<dbReference type="KEGG" id="bpt:Bpet1983"/>
<dbReference type="eggNOG" id="COG0662">
    <property type="taxonomic scope" value="Bacteria"/>
</dbReference>
<dbReference type="UniPathway" id="UPA00067">
    <property type="reaction ID" value="UER00123"/>
</dbReference>
<dbReference type="Proteomes" id="UP000001225">
    <property type="component" value="Chromosome"/>
</dbReference>
<dbReference type="GO" id="GO:0033990">
    <property type="term" value="F:ectoine synthase activity"/>
    <property type="evidence" value="ECO:0007669"/>
    <property type="project" value="UniProtKB-EC"/>
</dbReference>
<dbReference type="GO" id="GO:0019491">
    <property type="term" value="P:ectoine biosynthetic process"/>
    <property type="evidence" value="ECO:0007669"/>
    <property type="project" value="UniProtKB-UniRule"/>
</dbReference>
<dbReference type="CDD" id="cd06978">
    <property type="entry name" value="cupin_EctC"/>
    <property type="match status" value="1"/>
</dbReference>
<dbReference type="Gene3D" id="2.60.120.10">
    <property type="entry name" value="Jelly Rolls"/>
    <property type="match status" value="1"/>
</dbReference>
<dbReference type="HAMAP" id="MF_01255">
    <property type="entry name" value="Ectoine_synth"/>
    <property type="match status" value="1"/>
</dbReference>
<dbReference type="InterPro" id="IPR010462">
    <property type="entry name" value="Ectoine_synth"/>
</dbReference>
<dbReference type="InterPro" id="IPR014710">
    <property type="entry name" value="RmlC-like_jellyroll"/>
</dbReference>
<dbReference type="InterPro" id="IPR011051">
    <property type="entry name" value="RmlC_Cupin_sf"/>
</dbReference>
<dbReference type="NCBIfam" id="NF009806">
    <property type="entry name" value="PRK13290.1"/>
    <property type="match status" value="1"/>
</dbReference>
<dbReference type="PANTHER" id="PTHR39289">
    <property type="match status" value="1"/>
</dbReference>
<dbReference type="PANTHER" id="PTHR39289:SF1">
    <property type="entry name" value="L-ECTOINE SYNTHASE"/>
    <property type="match status" value="1"/>
</dbReference>
<dbReference type="Pfam" id="PF06339">
    <property type="entry name" value="Ectoine_synth"/>
    <property type="match status" value="1"/>
</dbReference>
<dbReference type="SUPFAM" id="SSF51182">
    <property type="entry name" value="RmlC-like cupins"/>
    <property type="match status" value="1"/>
</dbReference>
<reference key="1">
    <citation type="journal article" date="2008" name="BMC Genomics">
        <title>The missing link: Bordetella petrii is endowed with both the metabolic versatility of environmental bacteria and virulence traits of pathogenic Bordetellae.</title>
        <authorList>
            <person name="Gross R."/>
            <person name="Guzman C.A."/>
            <person name="Sebaihia M."/>
            <person name="Martin dos Santos V.A.P."/>
            <person name="Pieper D.H."/>
            <person name="Koebnik R."/>
            <person name="Lechner M."/>
            <person name="Bartels D."/>
            <person name="Buhrmester J."/>
            <person name="Choudhuri J.V."/>
            <person name="Ebensen T."/>
            <person name="Gaigalat L."/>
            <person name="Herrmann S."/>
            <person name="Khachane A.N."/>
            <person name="Larisch C."/>
            <person name="Link S."/>
            <person name="Linke B."/>
            <person name="Meyer F."/>
            <person name="Mormann S."/>
            <person name="Nakunst D."/>
            <person name="Rueckert C."/>
            <person name="Schneiker-Bekel S."/>
            <person name="Schulze K."/>
            <person name="Voerholter F.-J."/>
            <person name="Yevsa T."/>
            <person name="Engle J.T."/>
            <person name="Goldman W.E."/>
            <person name="Puehler A."/>
            <person name="Goebel U.B."/>
            <person name="Goesmann A."/>
            <person name="Bloecker H."/>
            <person name="Kaiser O."/>
            <person name="Martinez-Arias R."/>
        </authorList>
    </citation>
    <scope>NUCLEOTIDE SEQUENCE [LARGE SCALE GENOMIC DNA]</scope>
    <source>
        <strain>ATCC BAA-461 / DSM 12804 / CCUG 43448</strain>
    </source>
</reference>
<feature type="chain" id="PRO_1000139967" description="L-ectoine synthase">
    <location>
        <begin position="1"/>
        <end position="133"/>
    </location>
</feature>
<gene>
    <name evidence="1" type="primary">ectC</name>
    <name type="ordered locus">Bpet1983</name>
</gene>
<comment type="function">
    <text evidence="1">Catalyzes the circularization of gamma-N-acetyl-alpha,gamma-diaminobutyric acid (ADABA) to ectoine (1,4,5,6-tetrahydro-2-methyl-4-pyrimidine carboxylic acid), which is an excellent osmoprotectant.</text>
</comment>
<comment type="catalytic activity">
    <reaction evidence="1">
        <text>(2S)-4-acetamido-2-aminobutanoate = L-ectoine + H2O</text>
        <dbReference type="Rhea" id="RHEA:17281"/>
        <dbReference type="ChEBI" id="CHEBI:15377"/>
        <dbReference type="ChEBI" id="CHEBI:58515"/>
        <dbReference type="ChEBI" id="CHEBI:58929"/>
        <dbReference type="EC" id="4.2.1.108"/>
    </reaction>
</comment>
<comment type="pathway">
    <text evidence="1">Amine and polyamine biosynthesis; ectoine biosynthesis; L-ectoine from L-aspartate 4-semialdehyde: step 3/3.</text>
</comment>
<comment type="similarity">
    <text evidence="1">Belongs to the ectoine synthase family.</text>
</comment>